<dbReference type="EC" id="3.1.3.11" evidence="1"/>
<dbReference type="EMBL" id="CP001029">
    <property type="protein sequence ID" value="ACB79097.1"/>
    <property type="molecule type" value="Genomic_DNA"/>
</dbReference>
<dbReference type="RefSeq" id="WP_012452852.1">
    <property type="nucleotide sequence ID" value="NC_010725.1"/>
</dbReference>
<dbReference type="SMR" id="B1Z939"/>
<dbReference type="STRING" id="441620.Mpop_0919"/>
<dbReference type="KEGG" id="mpo:Mpop_0919"/>
<dbReference type="eggNOG" id="COG0158">
    <property type="taxonomic scope" value="Bacteria"/>
</dbReference>
<dbReference type="HOGENOM" id="CLU_039977_0_0_5"/>
<dbReference type="OrthoDB" id="9806756at2"/>
<dbReference type="UniPathway" id="UPA00138"/>
<dbReference type="Proteomes" id="UP000007136">
    <property type="component" value="Chromosome"/>
</dbReference>
<dbReference type="GO" id="GO:0005829">
    <property type="term" value="C:cytosol"/>
    <property type="evidence" value="ECO:0007669"/>
    <property type="project" value="TreeGrafter"/>
</dbReference>
<dbReference type="GO" id="GO:0042132">
    <property type="term" value="F:fructose 1,6-bisphosphate 1-phosphatase activity"/>
    <property type="evidence" value="ECO:0007669"/>
    <property type="project" value="UniProtKB-UniRule"/>
</dbReference>
<dbReference type="GO" id="GO:0000287">
    <property type="term" value="F:magnesium ion binding"/>
    <property type="evidence" value="ECO:0007669"/>
    <property type="project" value="UniProtKB-UniRule"/>
</dbReference>
<dbReference type="GO" id="GO:0030388">
    <property type="term" value="P:fructose 1,6-bisphosphate metabolic process"/>
    <property type="evidence" value="ECO:0007669"/>
    <property type="project" value="TreeGrafter"/>
</dbReference>
<dbReference type="GO" id="GO:0006002">
    <property type="term" value="P:fructose 6-phosphate metabolic process"/>
    <property type="evidence" value="ECO:0007669"/>
    <property type="project" value="TreeGrafter"/>
</dbReference>
<dbReference type="GO" id="GO:0006000">
    <property type="term" value="P:fructose metabolic process"/>
    <property type="evidence" value="ECO:0007669"/>
    <property type="project" value="TreeGrafter"/>
</dbReference>
<dbReference type="GO" id="GO:0006094">
    <property type="term" value="P:gluconeogenesis"/>
    <property type="evidence" value="ECO:0007669"/>
    <property type="project" value="UniProtKB-UniRule"/>
</dbReference>
<dbReference type="GO" id="GO:0005986">
    <property type="term" value="P:sucrose biosynthetic process"/>
    <property type="evidence" value="ECO:0007669"/>
    <property type="project" value="TreeGrafter"/>
</dbReference>
<dbReference type="CDD" id="cd00354">
    <property type="entry name" value="FBPase"/>
    <property type="match status" value="1"/>
</dbReference>
<dbReference type="FunFam" id="3.40.190.80:FF:000011">
    <property type="entry name" value="Fructose-1,6-bisphosphatase class 1"/>
    <property type="match status" value="1"/>
</dbReference>
<dbReference type="Gene3D" id="3.40.190.80">
    <property type="match status" value="1"/>
</dbReference>
<dbReference type="Gene3D" id="3.30.540.10">
    <property type="entry name" value="Fructose-1,6-Bisphosphatase, subunit A, domain 1"/>
    <property type="match status" value="1"/>
</dbReference>
<dbReference type="HAMAP" id="MF_01855">
    <property type="entry name" value="FBPase_class1"/>
    <property type="match status" value="1"/>
</dbReference>
<dbReference type="InterPro" id="IPR044015">
    <property type="entry name" value="FBPase_C_dom"/>
</dbReference>
<dbReference type="InterPro" id="IPR000146">
    <property type="entry name" value="FBPase_class-1"/>
</dbReference>
<dbReference type="InterPro" id="IPR033391">
    <property type="entry name" value="FBPase_N"/>
</dbReference>
<dbReference type="InterPro" id="IPR028343">
    <property type="entry name" value="FBPtase"/>
</dbReference>
<dbReference type="InterPro" id="IPR020548">
    <property type="entry name" value="Fructose_bisphosphatase_AS"/>
</dbReference>
<dbReference type="NCBIfam" id="NF006779">
    <property type="entry name" value="PRK09293.1-3"/>
    <property type="match status" value="1"/>
</dbReference>
<dbReference type="NCBIfam" id="NF006780">
    <property type="entry name" value="PRK09293.1-4"/>
    <property type="match status" value="1"/>
</dbReference>
<dbReference type="PANTHER" id="PTHR11556">
    <property type="entry name" value="FRUCTOSE-1,6-BISPHOSPHATASE-RELATED"/>
    <property type="match status" value="1"/>
</dbReference>
<dbReference type="PANTHER" id="PTHR11556:SF35">
    <property type="entry name" value="SEDOHEPTULOSE-1,7-BISPHOSPHATASE, CHLOROPLASTIC"/>
    <property type="match status" value="1"/>
</dbReference>
<dbReference type="Pfam" id="PF00316">
    <property type="entry name" value="FBPase"/>
    <property type="match status" value="1"/>
</dbReference>
<dbReference type="Pfam" id="PF18913">
    <property type="entry name" value="FBPase_C"/>
    <property type="match status" value="1"/>
</dbReference>
<dbReference type="PIRSF" id="PIRSF500210">
    <property type="entry name" value="FBPtase"/>
    <property type="match status" value="1"/>
</dbReference>
<dbReference type="PIRSF" id="PIRSF000904">
    <property type="entry name" value="FBPtase_SBPase"/>
    <property type="match status" value="1"/>
</dbReference>
<dbReference type="PRINTS" id="PR00115">
    <property type="entry name" value="F16BPHPHTASE"/>
</dbReference>
<dbReference type="SUPFAM" id="SSF56655">
    <property type="entry name" value="Carbohydrate phosphatase"/>
    <property type="match status" value="1"/>
</dbReference>
<dbReference type="PROSITE" id="PS00124">
    <property type="entry name" value="FBPASE"/>
    <property type="match status" value="1"/>
</dbReference>
<keyword id="KW-0119">Carbohydrate metabolism</keyword>
<keyword id="KW-0963">Cytoplasm</keyword>
<keyword id="KW-0378">Hydrolase</keyword>
<keyword id="KW-0460">Magnesium</keyword>
<keyword id="KW-0479">Metal-binding</keyword>
<reference key="1">
    <citation type="submission" date="2008-04" db="EMBL/GenBank/DDBJ databases">
        <title>Complete sequence of chromosome of Methylobacterium populi BJ001.</title>
        <authorList>
            <consortium name="US DOE Joint Genome Institute"/>
            <person name="Copeland A."/>
            <person name="Lucas S."/>
            <person name="Lapidus A."/>
            <person name="Glavina del Rio T."/>
            <person name="Dalin E."/>
            <person name="Tice H."/>
            <person name="Bruce D."/>
            <person name="Goodwin L."/>
            <person name="Pitluck S."/>
            <person name="Chertkov O."/>
            <person name="Brettin T."/>
            <person name="Detter J.C."/>
            <person name="Han C."/>
            <person name="Kuske C.R."/>
            <person name="Schmutz J."/>
            <person name="Larimer F."/>
            <person name="Land M."/>
            <person name="Hauser L."/>
            <person name="Kyrpides N."/>
            <person name="Mikhailova N."/>
            <person name="Marx C."/>
            <person name="Richardson P."/>
        </authorList>
    </citation>
    <scope>NUCLEOTIDE SEQUENCE [LARGE SCALE GENOMIC DNA]</scope>
    <source>
        <strain>ATCC BAA-705 / NCIMB 13946 / BJ001</strain>
    </source>
</reference>
<sequence>MTKPNGSSLDDHLDAEVARDASLADTAATIRALAAAAIDVSETVGRGALAGDLAAQGEHNSDGDVQKALDVIAHKRFMQALEEAPVAQVASEEAEDVVSLKPGAPLAVAIDPLDGSSNIGVGMVVGTIFGIRPVTLGTDVNASFLTPGTTQTAAGFVVYGPATTFVVTLGNGTRIFTLDRAEKVFRLTHDALQIVPSANEYAINASNVRHWDGPVKSFIEDCLRGTEGPRDRDFNMRWTAALVADAQRVLIRGGVFLYPGDNRKGYAQGRLRLLYETAPIAFLIEQAGGAATDGQARIMERVATKIHERSPLVFGSTEEVECVAKYYDGRQPSAGRSPLFGQRGLMRS</sequence>
<comment type="catalytic activity">
    <reaction evidence="1">
        <text>beta-D-fructose 1,6-bisphosphate + H2O = beta-D-fructose 6-phosphate + phosphate</text>
        <dbReference type="Rhea" id="RHEA:11064"/>
        <dbReference type="ChEBI" id="CHEBI:15377"/>
        <dbReference type="ChEBI" id="CHEBI:32966"/>
        <dbReference type="ChEBI" id="CHEBI:43474"/>
        <dbReference type="ChEBI" id="CHEBI:57634"/>
        <dbReference type="EC" id="3.1.3.11"/>
    </reaction>
</comment>
<comment type="cofactor">
    <cofactor evidence="1">
        <name>Mg(2+)</name>
        <dbReference type="ChEBI" id="CHEBI:18420"/>
    </cofactor>
    <text evidence="1">Binds 2 magnesium ions per subunit.</text>
</comment>
<comment type="pathway">
    <text evidence="1">Carbohydrate biosynthesis; gluconeogenesis.</text>
</comment>
<comment type="subunit">
    <text evidence="1">Homotetramer.</text>
</comment>
<comment type="subcellular location">
    <subcellularLocation>
        <location evidence="1">Cytoplasm</location>
    </subcellularLocation>
</comment>
<comment type="similarity">
    <text evidence="1">Belongs to the FBPase class 1 family.</text>
</comment>
<protein>
    <recommendedName>
        <fullName evidence="1">Fructose-1,6-bisphosphatase class 1</fullName>
        <shortName evidence="1">FBPase class 1</shortName>
        <ecNumber evidence="1">3.1.3.11</ecNumber>
    </recommendedName>
    <alternativeName>
        <fullName evidence="1">D-fructose-1,6-bisphosphate 1-phosphohydrolase class 1</fullName>
    </alternativeName>
</protein>
<proteinExistence type="inferred from homology"/>
<evidence type="ECO:0000255" key="1">
    <source>
        <dbReference type="HAMAP-Rule" id="MF_01855"/>
    </source>
</evidence>
<organism>
    <name type="scientific">Methylorubrum populi (strain ATCC BAA-705 / NCIMB 13946 / BJ001)</name>
    <name type="common">Methylobacterium populi</name>
    <dbReference type="NCBI Taxonomy" id="441620"/>
    <lineage>
        <taxon>Bacteria</taxon>
        <taxon>Pseudomonadati</taxon>
        <taxon>Pseudomonadota</taxon>
        <taxon>Alphaproteobacteria</taxon>
        <taxon>Hyphomicrobiales</taxon>
        <taxon>Methylobacteriaceae</taxon>
        <taxon>Methylorubrum</taxon>
    </lineage>
</organism>
<accession>B1Z939</accession>
<gene>
    <name evidence="1" type="primary">fbp</name>
    <name type="ordered locus">Mpop_0919</name>
</gene>
<feature type="chain" id="PRO_0000364601" description="Fructose-1,6-bisphosphatase class 1">
    <location>
        <begin position="1"/>
        <end position="348"/>
    </location>
</feature>
<feature type="binding site" evidence="1">
    <location>
        <position position="92"/>
    </location>
    <ligand>
        <name>Mg(2+)</name>
        <dbReference type="ChEBI" id="CHEBI:18420"/>
        <label>1</label>
    </ligand>
</feature>
<feature type="binding site" evidence="1">
    <location>
        <position position="111"/>
    </location>
    <ligand>
        <name>Mg(2+)</name>
        <dbReference type="ChEBI" id="CHEBI:18420"/>
        <label>1</label>
    </ligand>
</feature>
<feature type="binding site" evidence="1">
    <location>
        <position position="111"/>
    </location>
    <ligand>
        <name>Mg(2+)</name>
        <dbReference type="ChEBI" id="CHEBI:18420"/>
        <label>2</label>
    </ligand>
</feature>
<feature type="binding site" evidence="1">
    <location>
        <position position="113"/>
    </location>
    <ligand>
        <name>Mg(2+)</name>
        <dbReference type="ChEBI" id="CHEBI:18420"/>
        <label>1</label>
    </ligand>
</feature>
<feature type="binding site" evidence="1">
    <location>
        <begin position="114"/>
        <end position="117"/>
    </location>
    <ligand>
        <name>substrate</name>
    </ligand>
</feature>
<feature type="binding site" evidence="1">
    <location>
        <position position="114"/>
    </location>
    <ligand>
        <name>Mg(2+)</name>
        <dbReference type="ChEBI" id="CHEBI:18420"/>
        <label>2</label>
    </ligand>
</feature>
<feature type="binding site" evidence="1">
    <location>
        <position position="204"/>
    </location>
    <ligand>
        <name>substrate</name>
    </ligand>
</feature>
<feature type="binding site" evidence="1">
    <location>
        <position position="276"/>
    </location>
    <ligand>
        <name>Mg(2+)</name>
        <dbReference type="ChEBI" id="CHEBI:18420"/>
        <label>2</label>
    </ligand>
</feature>
<name>F16PA_METPB</name>